<dbReference type="EC" id="3.6.5.n1" evidence="1"/>
<dbReference type="EMBL" id="CP001107">
    <property type="protein sequence ID" value="ACR75365.1"/>
    <property type="molecule type" value="Genomic_DNA"/>
</dbReference>
<dbReference type="RefSeq" id="WP_012742463.1">
    <property type="nucleotide sequence ID" value="NC_012781.1"/>
</dbReference>
<dbReference type="SMR" id="C4Z9E3"/>
<dbReference type="STRING" id="515619.EUBREC_1621"/>
<dbReference type="PaxDb" id="515619-EUBREC_1621"/>
<dbReference type="GeneID" id="86988429"/>
<dbReference type="KEGG" id="ere:EUBREC_1621"/>
<dbReference type="HOGENOM" id="CLU_009995_3_3_9"/>
<dbReference type="Proteomes" id="UP000001477">
    <property type="component" value="Chromosome"/>
</dbReference>
<dbReference type="GO" id="GO:0005886">
    <property type="term" value="C:plasma membrane"/>
    <property type="evidence" value="ECO:0007669"/>
    <property type="project" value="UniProtKB-SubCell"/>
</dbReference>
<dbReference type="GO" id="GO:0005525">
    <property type="term" value="F:GTP binding"/>
    <property type="evidence" value="ECO:0007669"/>
    <property type="project" value="UniProtKB-UniRule"/>
</dbReference>
<dbReference type="GO" id="GO:0003924">
    <property type="term" value="F:GTPase activity"/>
    <property type="evidence" value="ECO:0007669"/>
    <property type="project" value="UniProtKB-UniRule"/>
</dbReference>
<dbReference type="GO" id="GO:0043022">
    <property type="term" value="F:ribosome binding"/>
    <property type="evidence" value="ECO:0007669"/>
    <property type="project" value="UniProtKB-UniRule"/>
</dbReference>
<dbReference type="GO" id="GO:0003746">
    <property type="term" value="F:translation elongation factor activity"/>
    <property type="evidence" value="ECO:0007669"/>
    <property type="project" value="UniProtKB-UniRule"/>
</dbReference>
<dbReference type="GO" id="GO:0045727">
    <property type="term" value="P:positive regulation of translation"/>
    <property type="evidence" value="ECO:0007669"/>
    <property type="project" value="UniProtKB-UniRule"/>
</dbReference>
<dbReference type="CDD" id="cd03699">
    <property type="entry name" value="EF4_II"/>
    <property type="match status" value="1"/>
</dbReference>
<dbReference type="CDD" id="cd16260">
    <property type="entry name" value="EF4_III"/>
    <property type="match status" value="1"/>
</dbReference>
<dbReference type="CDD" id="cd01890">
    <property type="entry name" value="LepA"/>
    <property type="match status" value="1"/>
</dbReference>
<dbReference type="CDD" id="cd03709">
    <property type="entry name" value="lepA_C"/>
    <property type="match status" value="1"/>
</dbReference>
<dbReference type="FunFam" id="3.40.50.300:FF:000078">
    <property type="entry name" value="Elongation factor 4"/>
    <property type="match status" value="1"/>
</dbReference>
<dbReference type="FunFam" id="2.40.30.10:FF:000015">
    <property type="entry name" value="Translation factor GUF1, mitochondrial"/>
    <property type="match status" value="1"/>
</dbReference>
<dbReference type="FunFam" id="3.30.70.240:FF:000007">
    <property type="entry name" value="Translation factor GUF1, mitochondrial"/>
    <property type="match status" value="1"/>
</dbReference>
<dbReference type="FunFam" id="3.30.70.2570:FF:000001">
    <property type="entry name" value="Translation factor GUF1, mitochondrial"/>
    <property type="match status" value="1"/>
</dbReference>
<dbReference type="FunFam" id="3.30.70.870:FF:000004">
    <property type="entry name" value="Translation factor GUF1, mitochondrial"/>
    <property type="match status" value="1"/>
</dbReference>
<dbReference type="Gene3D" id="3.30.70.240">
    <property type="match status" value="1"/>
</dbReference>
<dbReference type="Gene3D" id="3.30.70.2570">
    <property type="entry name" value="Elongation factor 4, C-terminal domain"/>
    <property type="match status" value="1"/>
</dbReference>
<dbReference type="Gene3D" id="3.30.70.870">
    <property type="entry name" value="Elongation Factor G (Translational Gtpase), domain 3"/>
    <property type="match status" value="1"/>
</dbReference>
<dbReference type="Gene3D" id="3.40.50.300">
    <property type="entry name" value="P-loop containing nucleotide triphosphate hydrolases"/>
    <property type="match status" value="1"/>
</dbReference>
<dbReference type="Gene3D" id="2.40.30.10">
    <property type="entry name" value="Translation factors"/>
    <property type="match status" value="1"/>
</dbReference>
<dbReference type="HAMAP" id="MF_00071">
    <property type="entry name" value="LepA"/>
    <property type="match status" value="1"/>
</dbReference>
<dbReference type="InterPro" id="IPR006297">
    <property type="entry name" value="EF-4"/>
</dbReference>
<dbReference type="InterPro" id="IPR035647">
    <property type="entry name" value="EFG_III/V"/>
</dbReference>
<dbReference type="InterPro" id="IPR000640">
    <property type="entry name" value="EFG_V-like"/>
</dbReference>
<dbReference type="InterPro" id="IPR004161">
    <property type="entry name" value="EFTu-like_2"/>
</dbReference>
<dbReference type="InterPro" id="IPR031157">
    <property type="entry name" value="G_TR_CS"/>
</dbReference>
<dbReference type="InterPro" id="IPR038363">
    <property type="entry name" value="LepA_C_sf"/>
</dbReference>
<dbReference type="InterPro" id="IPR013842">
    <property type="entry name" value="LepA_CTD"/>
</dbReference>
<dbReference type="InterPro" id="IPR035654">
    <property type="entry name" value="LepA_IV"/>
</dbReference>
<dbReference type="InterPro" id="IPR027417">
    <property type="entry name" value="P-loop_NTPase"/>
</dbReference>
<dbReference type="InterPro" id="IPR005225">
    <property type="entry name" value="Small_GTP-bd"/>
</dbReference>
<dbReference type="InterPro" id="IPR000795">
    <property type="entry name" value="T_Tr_GTP-bd_dom"/>
</dbReference>
<dbReference type="NCBIfam" id="TIGR01393">
    <property type="entry name" value="lepA"/>
    <property type="match status" value="1"/>
</dbReference>
<dbReference type="NCBIfam" id="TIGR00231">
    <property type="entry name" value="small_GTP"/>
    <property type="match status" value="1"/>
</dbReference>
<dbReference type="PANTHER" id="PTHR43512:SF4">
    <property type="entry name" value="TRANSLATION FACTOR GUF1 HOMOLOG, CHLOROPLASTIC"/>
    <property type="match status" value="1"/>
</dbReference>
<dbReference type="PANTHER" id="PTHR43512">
    <property type="entry name" value="TRANSLATION FACTOR GUF1-RELATED"/>
    <property type="match status" value="1"/>
</dbReference>
<dbReference type="Pfam" id="PF00679">
    <property type="entry name" value="EFG_C"/>
    <property type="match status" value="1"/>
</dbReference>
<dbReference type="Pfam" id="PF00009">
    <property type="entry name" value="GTP_EFTU"/>
    <property type="match status" value="1"/>
</dbReference>
<dbReference type="Pfam" id="PF03144">
    <property type="entry name" value="GTP_EFTU_D2"/>
    <property type="match status" value="1"/>
</dbReference>
<dbReference type="Pfam" id="PF06421">
    <property type="entry name" value="LepA_C"/>
    <property type="match status" value="1"/>
</dbReference>
<dbReference type="PRINTS" id="PR00315">
    <property type="entry name" value="ELONGATNFCT"/>
</dbReference>
<dbReference type="SMART" id="SM00838">
    <property type="entry name" value="EFG_C"/>
    <property type="match status" value="1"/>
</dbReference>
<dbReference type="SUPFAM" id="SSF54980">
    <property type="entry name" value="EF-G C-terminal domain-like"/>
    <property type="match status" value="2"/>
</dbReference>
<dbReference type="SUPFAM" id="SSF52540">
    <property type="entry name" value="P-loop containing nucleoside triphosphate hydrolases"/>
    <property type="match status" value="1"/>
</dbReference>
<dbReference type="PROSITE" id="PS00301">
    <property type="entry name" value="G_TR_1"/>
    <property type="match status" value="1"/>
</dbReference>
<dbReference type="PROSITE" id="PS51722">
    <property type="entry name" value="G_TR_2"/>
    <property type="match status" value="1"/>
</dbReference>
<comment type="function">
    <text evidence="1">Required for accurate and efficient protein synthesis under certain stress conditions. May act as a fidelity factor of the translation reaction, by catalyzing a one-codon backward translocation of tRNAs on improperly translocated ribosomes. Back-translocation proceeds from a post-translocation (POST) complex to a pre-translocation (PRE) complex, thus giving elongation factor G a second chance to translocate the tRNAs correctly. Binds to ribosomes in a GTP-dependent manner.</text>
</comment>
<comment type="catalytic activity">
    <reaction evidence="1">
        <text>GTP + H2O = GDP + phosphate + H(+)</text>
        <dbReference type="Rhea" id="RHEA:19669"/>
        <dbReference type="ChEBI" id="CHEBI:15377"/>
        <dbReference type="ChEBI" id="CHEBI:15378"/>
        <dbReference type="ChEBI" id="CHEBI:37565"/>
        <dbReference type="ChEBI" id="CHEBI:43474"/>
        <dbReference type="ChEBI" id="CHEBI:58189"/>
        <dbReference type="EC" id="3.6.5.n1"/>
    </reaction>
</comment>
<comment type="subcellular location">
    <subcellularLocation>
        <location evidence="1">Cell membrane</location>
        <topology evidence="1">Peripheral membrane protein</topology>
        <orientation evidence="1">Cytoplasmic side</orientation>
    </subcellularLocation>
</comment>
<comment type="similarity">
    <text evidence="1">Belongs to the TRAFAC class translation factor GTPase superfamily. Classic translation factor GTPase family. LepA subfamily.</text>
</comment>
<gene>
    <name evidence="1" type="primary">lepA</name>
    <name type="ordered locus">EUBREC_1621</name>
</gene>
<organism>
    <name type="scientific">Agathobacter rectalis (strain ATCC 33656 / DSM 3377 / JCM 17463 / KCTC 5835 / VPI 0990)</name>
    <name type="common">Eubacterium rectale</name>
    <dbReference type="NCBI Taxonomy" id="515619"/>
    <lineage>
        <taxon>Bacteria</taxon>
        <taxon>Bacillati</taxon>
        <taxon>Bacillota</taxon>
        <taxon>Clostridia</taxon>
        <taxon>Lachnospirales</taxon>
        <taxon>Lachnospiraceae</taxon>
        <taxon>Agathobacter</taxon>
    </lineage>
</organism>
<sequence length="603" mass="67485">MSIDQSKIRNFCIIAHIDHGKSTLADRIIEKTGTLTSREMQAQVLDNMDLERERGITIKSQAVRIIYTAKDGEEYIFNLIDTPGHVDFNYEVSRSLAACDGAILVVDAAQGVEAQTLANVYLALDHDLDVFPVINKVDLPSARPDEVAQEIEDVIGIEAMDAPRISAKTGLNIEDVLEQIVKKIPAPTGDKDAPLKALIFDATYDSYKGVIIFCRLREGSVKVGDTIKMMATGASDVVTEVGYFGAGQFIPCDELSAGMVGYIAASIKNVRDTRVGDTVTLVDRPCDEALPGYKKVNPMVYCGLYPADSAKYPDLRDALEKLQVNDASLQFEPETSLALGFGFRCGFLGLLHLEIIQERLEREFDLDLVTTAPSVIYKIHKTSGEVIDLTNPSNMPDPSEIEYMEEPYVSAEIMVTSDYVGAIMKLCQERRGVYISMEYIEKTRALIKYDLPLNEIIYDFFDALKSRSRGYASFDYEMKDYERSELVKLDILINKEMVDALSFIVFKESAYERGRKMCEKLKGEIPRHLFEIPIQAAVGGKIIARETVKALRKDVLAKCYGGDISRKKKLLEKQKEGKKRMRQVGNVEIPQEAFMSVLKLDEE</sequence>
<accession>C4Z9E3</accession>
<evidence type="ECO:0000255" key="1">
    <source>
        <dbReference type="HAMAP-Rule" id="MF_00071"/>
    </source>
</evidence>
<protein>
    <recommendedName>
        <fullName evidence="1">Elongation factor 4</fullName>
        <shortName evidence="1">EF-4</shortName>
        <ecNumber evidence="1">3.6.5.n1</ecNumber>
    </recommendedName>
    <alternativeName>
        <fullName evidence="1">Ribosomal back-translocase LepA</fullName>
    </alternativeName>
</protein>
<proteinExistence type="inferred from homology"/>
<name>LEPA_AGARV</name>
<reference key="1">
    <citation type="journal article" date="2009" name="Proc. Natl. Acad. Sci. U.S.A.">
        <title>Characterizing a model human gut microbiota composed of members of its two dominant bacterial phyla.</title>
        <authorList>
            <person name="Mahowald M.A."/>
            <person name="Rey F.E."/>
            <person name="Seedorf H."/>
            <person name="Turnbaugh P.J."/>
            <person name="Fulton R.S."/>
            <person name="Wollam A."/>
            <person name="Shah N."/>
            <person name="Wang C."/>
            <person name="Magrini V."/>
            <person name="Wilson R.K."/>
            <person name="Cantarel B.L."/>
            <person name="Coutinho P.M."/>
            <person name="Henrissat B."/>
            <person name="Crock L.W."/>
            <person name="Russell A."/>
            <person name="Verberkmoes N.C."/>
            <person name="Hettich R.L."/>
            <person name="Gordon J.I."/>
        </authorList>
    </citation>
    <scope>NUCLEOTIDE SEQUENCE [LARGE SCALE GENOMIC DNA]</scope>
    <source>
        <strain>ATCC 33656 / DSM 3377 / JCM 17463 / KCTC 5835 / LMG 30912 / VPI 0990</strain>
    </source>
</reference>
<keyword id="KW-1003">Cell membrane</keyword>
<keyword id="KW-0342">GTP-binding</keyword>
<keyword id="KW-0378">Hydrolase</keyword>
<keyword id="KW-0472">Membrane</keyword>
<keyword id="KW-0547">Nucleotide-binding</keyword>
<keyword id="KW-0648">Protein biosynthesis</keyword>
<feature type="chain" id="PRO_1000202450" description="Elongation factor 4">
    <location>
        <begin position="1"/>
        <end position="603"/>
    </location>
</feature>
<feature type="domain" description="tr-type G">
    <location>
        <begin position="6"/>
        <end position="188"/>
    </location>
</feature>
<feature type="binding site" evidence="1">
    <location>
        <begin position="18"/>
        <end position="23"/>
    </location>
    <ligand>
        <name>GTP</name>
        <dbReference type="ChEBI" id="CHEBI:37565"/>
    </ligand>
</feature>
<feature type="binding site" evidence="1">
    <location>
        <begin position="135"/>
        <end position="138"/>
    </location>
    <ligand>
        <name>GTP</name>
        <dbReference type="ChEBI" id="CHEBI:37565"/>
    </ligand>
</feature>